<evidence type="ECO:0000250" key="1"/>
<evidence type="ECO:0000269" key="2">
    <source>
    </source>
</evidence>
<evidence type="ECO:0000269" key="3">
    <source>
    </source>
</evidence>
<evidence type="ECO:0000269" key="4">
    <source>
    </source>
</evidence>
<evidence type="ECO:0000269" key="5">
    <source>
    </source>
</evidence>
<evidence type="ECO:0000305" key="6"/>
<dbReference type="EMBL" id="U83303">
    <property type="protein sequence ID" value="AAC51338.1"/>
    <property type="molecule type" value="Genomic_DNA"/>
</dbReference>
<dbReference type="EMBL" id="U81234">
    <property type="protein sequence ID" value="AAD00506.1"/>
    <property type="molecule type" value="mRNA"/>
</dbReference>
<dbReference type="EMBL" id="AK311981">
    <property type="protein sequence ID" value="BAG34920.1"/>
    <property type="molecule type" value="mRNA"/>
</dbReference>
<dbReference type="EMBL" id="AC108029">
    <property type="protein sequence ID" value="AAY40939.1"/>
    <property type="molecule type" value="Genomic_DNA"/>
</dbReference>
<dbReference type="EMBL" id="BC013744">
    <property type="protein sequence ID" value="AAH13744.1"/>
    <property type="molecule type" value="mRNA"/>
</dbReference>
<dbReference type="EMBL" id="Y08770">
    <property type="protein sequence ID" value="CAA70023.1"/>
    <property type="molecule type" value="mRNA"/>
</dbReference>
<dbReference type="CCDS" id="CCDS3560.1"/>
<dbReference type="PIR" id="A54188">
    <property type="entry name" value="A54188"/>
</dbReference>
<dbReference type="RefSeq" id="NP_002984.1">
    <property type="nucleotide sequence ID" value="NM_002993.4"/>
</dbReference>
<dbReference type="PDB" id="8XWM">
    <property type="method" value="EM"/>
    <property type="resolution" value="3.71 A"/>
    <property type="chains" value="D=38-114"/>
</dbReference>
<dbReference type="PDB" id="8XXX">
    <property type="method" value="EM"/>
    <property type="resolution" value="3.17 A"/>
    <property type="chains" value="D=38-114"/>
</dbReference>
<dbReference type="PDBsum" id="8XWM"/>
<dbReference type="PDBsum" id="8XXX"/>
<dbReference type="EMDB" id="EMD-38738"/>
<dbReference type="EMDB" id="EMD-38764"/>
<dbReference type="SMR" id="P80162"/>
<dbReference type="BioGRID" id="112274">
    <property type="interactions" value="34"/>
</dbReference>
<dbReference type="FunCoup" id="P80162">
    <property type="interactions" value="985"/>
</dbReference>
<dbReference type="IntAct" id="P80162">
    <property type="interactions" value="34"/>
</dbReference>
<dbReference type="MINT" id="P80162"/>
<dbReference type="STRING" id="9606.ENSP00000226317"/>
<dbReference type="iPTMnet" id="P80162"/>
<dbReference type="PhosphoSitePlus" id="P80162"/>
<dbReference type="BioMuta" id="CXCL6"/>
<dbReference type="DMDM" id="2851486"/>
<dbReference type="jPOST" id="P80162"/>
<dbReference type="MassIVE" id="P80162"/>
<dbReference type="PaxDb" id="9606-ENSP00000226317"/>
<dbReference type="PeptideAtlas" id="P80162"/>
<dbReference type="ProteomicsDB" id="57668"/>
<dbReference type="Antibodypedia" id="13323">
    <property type="antibodies" value="287 antibodies from 23 providers"/>
</dbReference>
<dbReference type="DNASU" id="6372"/>
<dbReference type="Ensembl" id="ENST00000226317.10">
    <property type="protein sequence ID" value="ENSP00000226317.5"/>
    <property type="gene ID" value="ENSG00000124875.10"/>
</dbReference>
<dbReference type="GeneID" id="6372"/>
<dbReference type="KEGG" id="hsa:6372"/>
<dbReference type="MANE-Select" id="ENST00000226317.10">
    <property type="protein sequence ID" value="ENSP00000226317.5"/>
    <property type="RefSeq nucleotide sequence ID" value="NM_002993.4"/>
    <property type="RefSeq protein sequence ID" value="NP_002984.1"/>
</dbReference>
<dbReference type="UCSC" id="uc003hhf.4">
    <property type="organism name" value="human"/>
</dbReference>
<dbReference type="AGR" id="HGNC:10643"/>
<dbReference type="CTD" id="6372"/>
<dbReference type="DisGeNET" id="6372"/>
<dbReference type="GeneCards" id="CXCL6"/>
<dbReference type="HGNC" id="HGNC:10643">
    <property type="gene designation" value="CXCL6"/>
</dbReference>
<dbReference type="HPA" id="ENSG00000124875">
    <property type="expression patterns" value="Group enriched (gallbladder, lymphoid tissue, urinary bladder)"/>
</dbReference>
<dbReference type="MIM" id="138965">
    <property type="type" value="gene"/>
</dbReference>
<dbReference type="neXtProt" id="NX_P80162"/>
<dbReference type="OpenTargets" id="ENSG00000124875"/>
<dbReference type="PharmGKB" id="PA35574"/>
<dbReference type="VEuPathDB" id="HostDB:ENSG00000124875"/>
<dbReference type="eggNOG" id="ENOG502S7MM">
    <property type="taxonomic scope" value="Eukaryota"/>
</dbReference>
<dbReference type="GeneTree" id="ENSGT00940000162749"/>
<dbReference type="InParanoid" id="P80162"/>
<dbReference type="OMA" id="MPRVNAK"/>
<dbReference type="OrthoDB" id="8872899at2759"/>
<dbReference type="PAN-GO" id="P80162">
    <property type="GO annotations" value="8 GO annotations based on evolutionary models"/>
</dbReference>
<dbReference type="PhylomeDB" id="P80162"/>
<dbReference type="TreeFam" id="TF333433"/>
<dbReference type="PathwayCommons" id="P80162"/>
<dbReference type="Reactome" id="R-HSA-380108">
    <property type="pathway name" value="Chemokine receptors bind chemokines"/>
</dbReference>
<dbReference type="Reactome" id="R-HSA-418594">
    <property type="pathway name" value="G alpha (i) signalling events"/>
</dbReference>
<dbReference type="SignaLink" id="P80162"/>
<dbReference type="BioGRID-ORCS" id="6372">
    <property type="hits" value="7 hits in 1135 CRISPR screens"/>
</dbReference>
<dbReference type="ChiTaRS" id="CXCL6">
    <property type="organism name" value="human"/>
</dbReference>
<dbReference type="GenomeRNAi" id="6372"/>
<dbReference type="Pharos" id="P80162">
    <property type="development level" value="Tbio"/>
</dbReference>
<dbReference type="PRO" id="PR:P80162"/>
<dbReference type="Proteomes" id="UP000005640">
    <property type="component" value="Chromosome 4"/>
</dbReference>
<dbReference type="RNAct" id="P80162">
    <property type="molecule type" value="protein"/>
</dbReference>
<dbReference type="Bgee" id="ENSG00000124875">
    <property type="expression patterns" value="Expressed in bronchial epithelial cell and 128 other cell types or tissues"/>
</dbReference>
<dbReference type="ExpressionAtlas" id="P80162">
    <property type="expression patterns" value="baseline and differential"/>
</dbReference>
<dbReference type="GO" id="GO:0005576">
    <property type="term" value="C:extracellular region"/>
    <property type="evidence" value="ECO:0000304"/>
    <property type="project" value="Reactome"/>
</dbReference>
<dbReference type="GO" id="GO:0005615">
    <property type="term" value="C:extracellular space"/>
    <property type="evidence" value="ECO:0000318"/>
    <property type="project" value="GO_Central"/>
</dbReference>
<dbReference type="GO" id="GO:0008009">
    <property type="term" value="F:chemokine activity"/>
    <property type="evidence" value="ECO:0000314"/>
    <property type="project" value="UniProtKB"/>
</dbReference>
<dbReference type="GO" id="GO:0045236">
    <property type="term" value="F:CXCR chemokine receptor binding"/>
    <property type="evidence" value="ECO:0000318"/>
    <property type="project" value="GO_Central"/>
</dbReference>
<dbReference type="GO" id="GO:0008201">
    <property type="term" value="F:heparin binding"/>
    <property type="evidence" value="ECO:0007669"/>
    <property type="project" value="UniProtKB-KW"/>
</dbReference>
<dbReference type="GO" id="GO:0140367">
    <property type="term" value="P:antibacterial innate immune response"/>
    <property type="evidence" value="ECO:0007669"/>
    <property type="project" value="Ensembl"/>
</dbReference>
<dbReference type="GO" id="GO:0061844">
    <property type="term" value="P:antimicrobial humoral immune response mediated by antimicrobial peptide"/>
    <property type="evidence" value="ECO:0000314"/>
    <property type="project" value="UniProtKB"/>
</dbReference>
<dbReference type="GO" id="GO:0007267">
    <property type="term" value="P:cell-cell signaling"/>
    <property type="evidence" value="ECO:0000304"/>
    <property type="project" value="ProtInc"/>
</dbReference>
<dbReference type="GO" id="GO:0071222">
    <property type="term" value="P:cellular response to lipopolysaccharide"/>
    <property type="evidence" value="ECO:0000314"/>
    <property type="project" value="UniProtKB"/>
</dbReference>
<dbReference type="GO" id="GO:0070098">
    <property type="term" value="P:chemokine-mediated signaling pathway"/>
    <property type="evidence" value="ECO:0007669"/>
    <property type="project" value="Ensembl"/>
</dbReference>
<dbReference type="GO" id="GO:0006935">
    <property type="term" value="P:chemotaxis"/>
    <property type="evidence" value="ECO:0000304"/>
    <property type="project" value="ProtInc"/>
</dbReference>
<dbReference type="GO" id="GO:0006954">
    <property type="term" value="P:inflammatory response"/>
    <property type="evidence" value="ECO:0000318"/>
    <property type="project" value="GO_Central"/>
</dbReference>
<dbReference type="GO" id="GO:0001776">
    <property type="term" value="P:leukocyte homeostasis"/>
    <property type="evidence" value="ECO:0007669"/>
    <property type="project" value="Ensembl"/>
</dbReference>
<dbReference type="GO" id="GO:0042119">
    <property type="term" value="P:neutrophil activation"/>
    <property type="evidence" value="ECO:0000314"/>
    <property type="project" value="UniProtKB"/>
</dbReference>
<dbReference type="GO" id="GO:0030593">
    <property type="term" value="P:neutrophil chemotaxis"/>
    <property type="evidence" value="ECO:0000314"/>
    <property type="project" value="UniProtKB"/>
</dbReference>
<dbReference type="GO" id="GO:0032642">
    <property type="term" value="P:regulation of chemokine production"/>
    <property type="evidence" value="ECO:0007669"/>
    <property type="project" value="Ensembl"/>
</dbReference>
<dbReference type="GO" id="GO:0070951">
    <property type="term" value="P:regulation of neutrophil mediated killing of gram-negative bacterium"/>
    <property type="evidence" value="ECO:0007669"/>
    <property type="project" value="Ensembl"/>
</dbReference>
<dbReference type="GO" id="GO:0007165">
    <property type="term" value="P:signal transduction"/>
    <property type="evidence" value="ECO:0000304"/>
    <property type="project" value="ProtInc"/>
</dbReference>
<dbReference type="CDD" id="cd00273">
    <property type="entry name" value="Chemokine_CXC"/>
    <property type="match status" value="1"/>
</dbReference>
<dbReference type="FunFam" id="2.40.50.40:FF:000004">
    <property type="entry name" value="C-X-C motif chemokine"/>
    <property type="match status" value="1"/>
</dbReference>
<dbReference type="Gene3D" id="2.40.50.40">
    <property type="match status" value="1"/>
</dbReference>
<dbReference type="InterPro" id="IPR039809">
    <property type="entry name" value="Chemokine_b/g/d"/>
</dbReference>
<dbReference type="InterPro" id="IPR001089">
    <property type="entry name" value="Chemokine_CXC"/>
</dbReference>
<dbReference type="InterPro" id="IPR018048">
    <property type="entry name" value="Chemokine_CXC_CS"/>
</dbReference>
<dbReference type="InterPro" id="IPR001811">
    <property type="entry name" value="Chemokine_IL8-like_dom"/>
</dbReference>
<dbReference type="InterPro" id="IPR033899">
    <property type="entry name" value="CXC_Chemokine_domain"/>
</dbReference>
<dbReference type="InterPro" id="IPR036048">
    <property type="entry name" value="Interleukin_8-like_sf"/>
</dbReference>
<dbReference type="PANTHER" id="PTHR12015:SF201">
    <property type="entry name" value="C-X-C MOTIF CHEMOKINE 6"/>
    <property type="match status" value="1"/>
</dbReference>
<dbReference type="PANTHER" id="PTHR12015">
    <property type="entry name" value="SMALL INDUCIBLE CYTOKINE A"/>
    <property type="match status" value="1"/>
</dbReference>
<dbReference type="Pfam" id="PF00048">
    <property type="entry name" value="IL8"/>
    <property type="match status" value="1"/>
</dbReference>
<dbReference type="PRINTS" id="PR00436">
    <property type="entry name" value="INTERLEUKIN8"/>
</dbReference>
<dbReference type="PRINTS" id="PR00437">
    <property type="entry name" value="SMALLCYTKCXC"/>
</dbReference>
<dbReference type="SMART" id="SM00199">
    <property type="entry name" value="SCY"/>
    <property type="match status" value="1"/>
</dbReference>
<dbReference type="SUPFAM" id="SSF54117">
    <property type="entry name" value="Interleukin 8-like chemokines"/>
    <property type="match status" value="1"/>
</dbReference>
<dbReference type="PROSITE" id="PS00471">
    <property type="entry name" value="SMALL_CYTOKINES_CXC"/>
    <property type="match status" value="1"/>
</dbReference>
<organism>
    <name type="scientific">Homo sapiens</name>
    <name type="common">Human</name>
    <dbReference type="NCBI Taxonomy" id="9606"/>
    <lineage>
        <taxon>Eukaryota</taxon>
        <taxon>Metazoa</taxon>
        <taxon>Chordata</taxon>
        <taxon>Craniata</taxon>
        <taxon>Vertebrata</taxon>
        <taxon>Euteleostomi</taxon>
        <taxon>Mammalia</taxon>
        <taxon>Eutheria</taxon>
        <taxon>Euarchontoglires</taxon>
        <taxon>Primates</taxon>
        <taxon>Haplorrhini</taxon>
        <taxon>Catarrhini</taxon>
        <taxon>Hominidae</taxon>
        <taxon>Homo</taxon>
    </lineage>
</organism>
<gene>
    <name type="primary">CXCL6</name>
    <name type="synonym">GCP2</name>
    <name type="synonym">SCYB6</name>
</gene>
<accession>P80162</accession>
<accession>B2R4X3</accession>
<accession>Q4W5D4</accession>
<comment type="function">
    <text evidence="2 3 4 5">Chemotactic for neutrophil granulocytes. Signals through binding and activation of its receptors (CXCR1 and CXCR2). In addition to its chemotactic and angiogenic properties, it has strong antibacterial activity against Gram-positive and Gram-negative bacteria (90-fold-higher when compared to CXCL5 and CXCL7).</text>
</comment>
<comment type="interaction">
    <interactant intactId="EBI-9214033">
        <id>P80162</id>
    </interactant>
    <interactant intactId="EBI-2848366">
        <id>P13501</id>
        <label>CCL5</label>
    </interactant>
    <organismsDiffer>false</organismsDiffer>
    <experiments>2</experiments>
</comment>
<comment type="interaction">
    <interactant intactId="EBI-9214033">
        <id>P80162</id>
    </interactant>
    <interactant intactId="EBI-3913254">
        <id>P48061</id>
        <label>CXCL12</label>
    </interactant>
    <organismsDiffer>false</organismsDiffer>
    <experiments>2</experiments>
</comment>
<comment type="interaction">
    <interactant intactId="EBI-9214033">
        <id>P80162</id>
    </interactant>
    <interactant intactId="EBI-2565740">
        <id>P02776</id>
        <label>PF4</label>
    </interactant>
    <organismsDiffer>false</organismsDiffer>
    <experiments>2</experiments>
</comment>
<comment type="subcellular location">
    <subcellularLocation>
        <location>Secreted</location>
    </subcellularLocation>
</comment>
<comment type="similarity">
    <text evidence="6">Belongs to the intercrine alpha (chemokine CxC) family.</text>
</comment>
<comment type="online information" name="Wikipedia">
    <link uri="https://en.wikipedia.org/wiki/CXCL6"/>
    <text>CXCL6 entry</text>
</comment>
<name>CXCL6_HUMAN</name>
<protein>
    <recommendedName>
        <fullName>C-X-C motif chemokine 6</fullName>
    </recommendedName>
    <alternativeName>
        <fullName>Chemokine alpha 3</fullName>
        <shortName>CKA-3</shortName>
    </alternativeName>
    <alternativeName>
        <fullName>Granulocyte chemotactic protein 2</fullName>
        <shortName>GCP-2</shortName>
    </alternativeName>
    <alternativeName>
        <fullName>Small-inducible cytokine B6</fullName>
    </alternativeName>
    <component>
        <recommendedName>
            <fullName>Small-inducible cytokine B6, N-processed variant 1</fullName>
        </recommendedName>
    </component>
    <component>
        <recommendedName>
            <fullName>Small-inducible cytokine B6, N-processed variant 2</fullName>
        </recommendedName>
    </component>
    <component>
        <recommendedName>
            <fullName>Small-inducible cytokine B6, N-processed variant 3</fullName>
        </recommendedName>
    </component>
</protein>
<reference key="1">
    <citation type="journal article" date="1997" name="J. Immunol.">
        <title>Cloning and characterization of the human granulocyte chemotactic protein-2 gene.</title>
        <authorList>
            <person name="Rovai L.E."/>
            <person name="Herschman H.R."/>
            <person name="Smith J.B."/>
        </authorList>
    </citation>
    <scope>NUCLEOTIDE SEQUENCE [GENOMIC DNA]</scope>
</reference>
<reference key="2">
    <citation type="submission" date="1996-12" db="EMBL/GenBank/DDBJ databases">
        <title>Cloning, sequencing and biological characterization of a C-X-C chemokine, CKA-3.</title>
        <authorList>
            <person name="Ni J."/>
            <person name="Su J."/>
            <person name="Li H."/>
        </authorList>
    </citation>
    <scope>NUCLEOTIDE SEQUENCE [MRNA]</scope>
</reference>
<reference key="3">
    <citation type="journal article" date="2004" name="Nat. Genet.">
        <title>Complete sequencing and characterization of 21,243 full-length human cDNAs.</title>
        <authorList>
            <person name="Ota T."/>
            <person name="Suzuki Y."/>
            <person name="Nishikawa T."/>
            <person name="Otsuki T."/>
            <person name="Sugiyama T."/>
            <person name="Irie R."/>
            <person name="Wakamatsu A."/>
            <person name="Hayashi K."/>
            <person name="Sato H."/>
            <person name="Nagai K."/>
            <person name="Kimura K."/>
            <person name="Makita H."/>
            <person name="Sekine M."/>
            <person name="Obayashi M."/>
            <person name="Nishi T."/>
            <person name="Shibahara T."/>
            <person name="Tanaka T."/>
            <person name="Ishii S."/>
            <person name="Yamamoto J."/>
            <person name="Saito K."/>
            <person name="Kawai Y."/>
            <person name="Isono Y."/>
            <person name="Nakamura Y."/>
            <person name="Nagahari K."/>
            <person name="Murakami K."/>
            <person name="Yasuda T."/>
            <person name="Iwayanagi T."/>
            <person name="Wagatsuma M."/>
            <person name="Shiratori A."/>
            <person name="Sudo H."/>
            <person name="Hosoiri T."/>
            <person name="Kaku Y."/>
            <person name="Kodaira H."/>
            <person name="Kondo H."/>
            <person name="Sugawara M."/>
            <person name="Takahashi M."/>
            <person name="Kanda K."/>
            <person name="Yokoi T."/>
            <person name="Furuya T."/>
            <person name="Kikkawa E."/>
            <person name="Omura Y."/>
            <person name="Abe K."/>
            <person name="Kamihara K."/>
            <person name="Katsuta N."/>
            <person name="Sato K."/>
            <person name="Tanikawa M."/>
            <person name="Yamazaki M."/>
            <person name="Ninomiya K."/>
            <person name="Ishibashi T."/>
            <person name="Yamashita H."/>
            <person name="Murakawa K."/>
            <person name="Fujimori K."/>
            <person name="Tanai H."/>
            <person name="Kimata M."/>
            <person name="Watanabe M."/>
            <person name="Hiraoka S."/>
            <person name="Chiba Y."/>
            <person name="Ishida S."/>
            <person name="Ono Y."/>
            <person name="Takiguchi S."/>
            <person name="Watanabe S."/>
            <person name="Yosida M."/>
            <person name="Hotuta T."/>
            <person name="Kusano J."/>
            <person name="Kanehori K."/>
            <person name="Takahashi-Fujii A."/>
            <person name="Hara H."/>
            <person name="Tanase T.-O."/>
            <person name="Nomura Y."/>
            <person name="Togiya S."/>
            <person name="Komai F."/>
            <person name="Hara R."/>
            <person name="Takeuchi K."/>
            <person name="Arita M."/>
            <person name="Imose N."/>
            <person name="Musashino K."/>
            <person name="Yuuki H."/>
            <person name="Oshima A."/>
            <person name="Sasaki N."/>
            <person name="Aotsuka S."/>
            <person name="Yoshikawa Y."/>
            <person name="Matsunawa H."/>
            <person name="Ichihara T."/>
            <person name="Shiohata N."/>
            <person name="Sano S."/>
            <person name="Moriya S."/>
            <person name="Momiyama H."/>
            <person name="Satoh N."/>
            <person name="Takami S."/>
            <person name="Terashima Y."/>
            <person name="Suzuki O."/>
            <person name="Nakagawa S."/>
            <person name="Senoh A."/>
            <person name="Mizoguchi H."/>
            <person name="Goto Y."/>
            <person name="Shimizu F."/>
            <person name="Wakebe H."/>
            <person name="Hishigaki H."/>
            <person name="Watanabe T."/>
            <person name="Sugiyama A."/>
            <person name="Takemoto M."/>
            <person name="Kawakami B."/>
            <person name="Yamazaki M."/>
            <person name="Watanabe K."/>
            <person name="Kumagai A."/>
            <person name="Itakura S."/>
            <person name="Fukuzumi Y."/>
            <person name="Fujimori Y."/>
            <person name="Komiyama M."/>
            <person name="Tashiro H."/>
            <person name="Tanigami A."/>
            <person name="Fujiwara T."/>
            <person name="Ono T."/>
            <person name="Yamada K."/>
            <person name="Fujii Y."/>
            <person name="Ozaki K."/>
            <person name="Hirao M."/>
            <person name="Ohmori Y."/>
            <person name="Kawabata A."/>
            <person name="Hikiji T."/>
            <person name="Kobatake N."/>
            <person name="Inagaki H."/>
            <person name="Ikema Y."/>
            <person name="Okamoto S."/>
            <person name="Okitani R."/>
            <person name="Kawakami T."/>
            <person name="Noguchi S."/>
            <person name="Itoh T."/>
            <person name="Shigeta K."/>
            <person name="Senba T."/>
            <person name="Matsumura K."/>
            <person name="Nakajima Y."/>
            <person name="Mizuno T."/>
            <person name="Morinaga M."/>
            <person name="Sasaki M."/>
            <person name="Togashi T."/>
            <person name="Oyama M."/>
            <person name="Hata H."/>
            <person name="Watanabe M."/>
            <person name="Komatsu T."/>
            <person name="Mizushima-Sugano J."/>
            <person name="Satoh T."/>
            <person name="Shirai Y."/>
            <person name="Takahashi Y."/>
            <person name="Nakagawa K."/>
            <person name="Okumura K."/>
            <person name="Nagase T."/>
            <person name="Nomura N."/>
            <person name="Kikuchi H."/>
            <person name="Masuho Y."/>
            <person name="Yamashita R."/>
            <person name="Nakai K."/>
            <person name="Yada T."/>
            <person name="Nakamura Y."/>
            <person name="Ohara O."/>
            <person name="Isogai T."/>
            <person name="Sugano S."/>
        </authorList>
    </citation>
    <scope>NUCLEOTIDE SEQUENCE [LARGE SCALE MRNA]</scope>
    <source>
        <tissue>Spleen</tissue>
    </source>
</reference>
<reference key="4">
    <citation type="journal article" date="2005" name="Nature">
        <title>Generation and annotation of the DNA sequences of human chromosomes 2 and 4.</title>
        <authorList>
            <person name="Hillier L.W."/>
            <person name="Graves T.A."/>
            <person name="Fulton R.S."/>
            <person name="Fulton L.A."/>
            <person name="Pepin K.H."/>
            <person name="Minx P."/>
            <person name="Wagner-McPherson C."/>
            <person name="Layman D."/>
            <person name="Wylie K."/>
            <person name="Sekhon M."/>
            <person name="Becker M.C."/>
            <person name="Fewell G.A."/>
            <person name="Delehaunty K.D."/>
            <person name="Miner T.L."/>
            <person name="Nash W.E."/>
            <person name="Kremitzki C."/>
            <person name="Oddy L."/>
            <person name="Du H."/>
            <person name="Sun H."/>
            <person name="Bradshaw-Cordum H."/>
            <person name="Ali J."/>
            <person name="Carter J."/>
            <person name="Cordes M."/>
            <person name="Harris A."/>
            <person name="Isak A."/>
            <person name="van Brunt A."/>
            <person name="Nguyen C."/>
            <person name="Du F."/>
            <person name="Courtney L."/>
            <person name="Kalicki J."/>
            <person name="Ozersky P."/>
            <person name="Abbott S."/>
            <person name="Armstrong J."/>
            <person name="Belter E.A."/>
            <person name="Caruso L."/>
            <person name="Cedroni M."/>
            <person name="Cotton M."/>
            <person name="Davidson T."/>
            <person name="Desai A."/>
            <person name="Elliott G."/>
            <person name="Erb T."/>
            <person name="Fronick C."/>
            <person name="Gaige T."/>
            <person name="Haakenson W."/>
            <person name="Haglund K."/>
            <person name="Holmes A."/>
            <person name="Harkins R."/>
            <person name="Kim K."/>
            <person name="Kruchowski S.S."/>
            <person name="Strong C.M."/>
            <person name="Grewal N."/>
            <person name="Goyea E."/>
            <person name="Hou S."/>
            <person name="Levy A."/>
            <person name="Martinka S."/>
            <person name="Mead K."/>
            <person name="McLellan M.D."/>
            <person name="Meyer R."/>
            <person name="Randall-Maher J."/>
            <person name="Tomlinson C."/>
            <person name="Dauphin-Kohlberg S."/>
            <person name="Kozlowicz-Reilly A."/>
            <person name="Shah N."/>
            <person name="Swearengen-Shahid S."/>
            <person name="Snider J."/>
            <person name="Strong J.T."/>
            <person name="Thompson J."/>
            <person name="Yoakum M."/>
            <person name="Leonard S."/>
            <person name="Pearman C."/>
            <person name="Trani L."/>
            <person name="Radionenko M."/>
            <person name="Waligorski J.E."/>
            <person name="Wang C."/>
            <person name="Rock S.M."/>
            <person name="Tin-Wollam A.-M."/>
            <person name="Maupin R."/>
            <person name="Latreille P."/>
            <person name="Wendl M.C."/>
            <person name="Yang S.-P."/>
            <person name="Pohl C."/>
            <person name="Wallis J.W."/>
            <person name="Spieth J."/>
            <person name="Bieri T.A."/>
            <person name="Berkowicz N."/>
            <person name="Nelson J.O."/>
            <person name="Osborne J."/>
            <person name="Ding L."/>
            <person name="Meyer R."/>
            <person name="Sabo A."/>
            <person name="Shotland Y."/>
            <person name="Sinha P."/>
            <person name="Wohldmann P.E."/>
            <person name="Cook L.L."/>
            <person name="Hickenbotham M.T."/>
            <person name="Eldred J."/>
            <person name="Williams D."/>
            <person name="Jones T.A."/>
            <person name="She X."/>
            <person name="Ciccarelli F.D."/>
            <person name="Izaurralde E."/>
            <person name="Taylor J."/>
            <person name="Schmutz J."/>
            <person name="Myers R.M."/>
            <person name="Cox D.R."/>
            <person name="Huang X."/>
            <person name="McPherson J.D."/>
            <person name="Mardis E.R."/>
            <person name="Clifton S.W."/>
            <person name="Warren W.C."/>
            <person name="Chinwalla A.T."/>
            <person name="Eddy S.R."/>
            <person name="Marra M.A."/>
            <person name="Ovcharenko I."/>
            <person name="Furey T.S."/>
            <person name="Miller W."/>
            <person name="Eichler E.E."/>
            <person name="Bork P."/>
            <person name="Suyama M."/>
            <person name="Torrents D."/>
            <person name="Waterston R.H."/>
            <person name="Wilson R.K."/>
        </authorList>
    </citation>
    <scope>NUCLEOTIDE SEQUENCE [LARGE SCALE GENOMIC DNA]</scope>
</reference>
<reference key="5">
    <citation type="journal article" date="2004" name="Genome Res.">
        <title>The status, quality, and expansion of the NIH full-length cDNA project: the Mammalian Gene Collection (MGC).</title>
        <authorList>
            <consortium name="The MGC Project Team"/>
        </authorList>
    </citation>
    <scope>NUCLEOTIDE SEQUENCE [LARGE SCALE MRNA]</scope>
    <source>
        <tissue>Liver</tissue>
    </source>
</reference>
<reference key="6">
    <citation type="journal article" date="1997" name="Eur. J. Biochem.">
        <title>Cloning, bacterial expression and biological characterization of recombinant human granulocyte chemotactic protein-2 and differential expression of granulocyte chemotactic protein-2 and epithelial cell-derived neutrophil activating peptide-78 mRNAs.</title>
        <authorList>
            <person name="Froyen G."/>
            <person name="Proost P."/>
            <person name="Ronsse I."/>
            <person name="Mitera T."/>
            <person name="Haelens A."/>
            <person name="Wuyts A."/>
            <person name="Opdenakker G."/>
            <person name="van Damme J."/>
            <person name="Billiau A."/>
        </authorList>
    </citation>
    <scope>NUCLEOTIDE SEQUENCE [MRNA] OF 38-114</scope>
    <scope>FUNCTION</scope>
</reference>
<reference key="7">
    <citation type="journal article" date="1993" name="Biochemistry">
        <title>Human and bovine granulocyte chemotactic protein-2: complete amino acid sequence and functional characterization as chemokines.</title>
        <authorList>
            <person name="Proost P."/>
            <person name="Wuyts A."/>
            <person name="Conings R."/>
            <person name="Lenaerts J.-P."/>
            <person name="Billiau A."/>
            <person name="Opdenakker G."/>
            <person name="van Damme J."/>
        </authorList>
    </citation>
    <scope>PROTEIN SEQUENCE OF 38-112</scope>
    <scope>FUNCTION</scope>
    <scope>PROTEOLYTIC PROCESSING OF N-TERMINAL</scope>
    <source>
        <tissue>Osteosarcoma</tissue>
    </source>
</reference>
<reference key="8">
    <citation type="journal article" date="1993" name="J. Immunol.">
        <title>Identification of a novel granulocyte chemotactic protein (GCP-2) from human tumor cells. In vitro and in vivo comparison with natural forms of GRO, IP-10, and IL-8.</title>
        <authorList>
            <person name="Proost P."/>
            <person name="de Wolf-Peeters C."/>
            <person name="Conings R."/>
            <person name="Opdenakker G."/>
            <person name="Billiau A."/>
            <person name="van Damme J."/>
        </authorList>
    </citation>
    <scope>PROTEIN SEQUENCE OF 38-57</scope>
    <scope>FUNCTION</scope>
    <source>
        <tissue>Osteosarcoma</tissue>
    </source>
</reference>
<reference key="9">
    <citation type="journal article" date="2008" name="Antimicrob. Agents Chemother.">
        <title>The human CXC chemokine granulocyte chemotactic protein 2 (GCP-2)/CXCL6 possesses membrane-disrupting properties and is antibacterial.</title>
        <authorList>
            <person name="Linge H.M."/>
            <person name="Collin M."/>
            <person name="Nordenfelt P."/>
            <person name="Morgelin M."/>
            <person name="Malmsten M."/>
            <person name="Egesten A."/>
        </authorList>
    </citation>
    <scope>FUNCTION</scope>
</reference>
<proteinExistence type="evidence at protein level"/>
<keyword id="KW-0002">3D-structure</keyword>
<keyword id="KW-0044">Antibiotic</keyword>
<keyword id="KW-0929">Antimicrobial</keyword>
<keyword id="KW-0145">Chemotaxis</keyword>
<keyword id="KW-0202">Cytokine</keyword>
<keyword id="KW-0903">Direct protein sequencing</keyword>
<keyword id="KW-1015">Disulfide bond</keyword>
<keyword id="KW-0358">Heparin-binding</keyword>
<keyword id="KW-1267">Proteomics identification</keyword>
<keyword id="KW-1185">Reference proteome</keyword>
<keyword id="KW-0964">Secreted</keyword>
<keyword id="KW-0732">Signal</keyword>
<feature type="signal peptide" evidence="3 4">
    <location>
        <begin position="1"/>
        <end position="37"/>
    </location>
</feature>
<feature type="chain" id="PRO_0000005084" description="C-X-C motif chemokine 6">
    <location>
        <begin position="38"/>
        <end position="114"/>
    </location>
</feature>
<feature type="chain" id="PRO_0000005085" description="Small-inducible cytokine B6, N-processed variant 1">
    <location>
        <begin position="40"/>
        <end position="114"/>
    </location>
</feature>
<feature type="chain" id="PRO_0000005086" description="Small-inducible cytokine B6, N-processed variant 2">
    <location>
        <begin position="43"/>
        <end position="114"/>
    </location>
</feature>
<feature type="chain" id="PRO_0000005087" description="Small-inducible cytokine B6, N-processed variant 3">
    <location>
        <begin position="46"/>
        <end position="114"/>
    </location>
</feature>
<feature type="disulfide bond" evidence="1">
    <location>
        <begin position="49"/>
        <end position="75"/>
    </location>
</feature>
<feature type="disulfide bond" evidence="1">
    <location>
        <begin position="51"/>
        <end position="91"/>
    </location>
</feature>
<sequence>MSLPSSRAARVPGPSGSLCALLALLLLLTPPGPLASAGPVSAVLTELRCTCLRVTLRVNPKTIGKLQVFPAGPQCSKVEVVASLKNGKQVCLDPEAPFLKKVIQKILDSGNKKN</sequence>